<protein>
    <recommendedName>
        <fullName>ATP-dependent RNA helicase MAK5</fullName>
        <ecNumber>3.6.4.13</ecNumber>
    </recommendedName>
</protein>
<evidence type="ECO:0000250" key="1"/>
<evidence type="ECO:0000255" key="2">
    <source>
        <dbReference type="PROSITE-ProRule" id="PRU00541"/>
    </source>
</evidence>
<evidence type="ECO:0000255" key="3">
    <source>
        <dbReference type="PROSITE-ProRule" id="PRU00542"/>
    </source>
</evidence>
<evidence type="ECO:0000256" key="4">
    <source>
        <dbReference type="SAM" id="MobiDB-lite"/>
    </source>
</evidence>
<evidence type="ECO:0000305" key="5"/>
<keyword id="KW-0067">ATP-binding</keyword>
<keyword id="KW-0347">Helicase</keyword>
<keyword id="KW-0378">Hydrolase</keyword>
<keyword id="KW-0547">Nucleotide-binding</keyword>
<keyword id="KW-0539">Nucleus</keyword>
<keyword id="KW-1185">Reference proteome</keyword>
<keyword id="KW-0690">Ribosome biogenesis</keyword>
<keyword id="KW-0694">RNA-binding</keyword>
<keyword id="KW-0698">rRNA processing</keyword>
<reference key="1">
    <citation type="journal article" date="2004" name="Proc. Natl. Acad. Sci. U.S.A.">
        <title>The diploid genome sequence of Candida albicans.</title>
        <authorList>
            <person name="Jones T."/>
            <person name="Federspiel N.A."/>
            <person name="Chibana H."/>
            <person name="Dungan J."/>
            <person name="Kalman S."/>
            <person name="Magee B.B."/>
            <person name="Newport G."/>
            <person name="Thorstenson Y.R."/>
            <person name="Agabian N."/>
            <person name="Magee P.T."/>
            <person name="Davis R.W."/>
            <person name="Scherer S."/>
        </authorList>
    </citation>
    <scope>NUCLEOTIDE SEQUENCE [LARGE SCALE GENOMIC DNA]</scope>
    <source>
        <strain>SC5314 / ATCC MYA-2876</strain>
    </source>
</reference>
<reference key="2">
    <citation type="journal article" date="2007" name="Genome Biol.">
        <title>Assembly of the Candida albicans genome into sixteen supercontigs aligned on the eight chromosomes.</title>
        <authorList>
            <person name="van het Hoog M."/>
            <person name="Rast T.J."/>
            <person name="Martchenko M."/>
            <person name="Grindle S."/>
            <person name="Dignard D."/>
            <person name="Hogues H."/>
            <person name="Cuomo C."/>
            <person name="Berriman M."/>
            <person name="Scherer S."/>
            <person name="Magee B.B."/>
            <person name="Whiteway M."/>
            <person name="Chibana H."/>
            <person name="Nantel A."/>
            <person name="Magee P.T."/>
        </authorList>
    </citation>
    <scope>GENOME REANNOTATION</scope>
    <source>
        <strain>SC5314 / ATCC MYA-2876</strain>
    </source>
</reference>
<reference key="3">
    <citation type="journal article" date="2013" name="Genome Biol.">
        <title>Assembly of a phased diploid Candida albicans genome facilitates allele-specific measurements and provides a simple model for repeat and indel structure.</title>
        <authorList>
            <person name="Muzzey D."/>
            <person name="Schwartz K."/>
            <person name="Weissman J.S."/>
            <person name="Sherlock G."/>
        </authorList>
    </citation>
    <scope>NUCLEOTIDE SEQUENCE [LARGE SCALE GENOMIC DNA]</scope>
    <scope>GENOME REANNOTATION</scope>
    <source>
        <strain>SC5314 / ATCC MYA-2876</strain>
    </source>
</reference>
<accession>Q59ZH9</accession>
<accession>A0A1D8PHB5</accession>
<dbReference type="EC" id="3.6.4.13"/>
<dbReference type="EMBL" id="CP017624">
    <property type="protein sequence ID" value="AOW27527.1"/>
    <property type="molecule type" value="Genomic_DNA"/>
</dbReference>
<dbReference type="RefSeq" id="XP_714899.2">
    <property type="nucleotide sequence ID" value="XM_709806.2"/>
</dbReference>
<dbReference type="SMR" id="Q59ZH9"/>
<dbReference type="FunCoup" id="Q59ZH9">
    <property type="interactions" value="1005"/>
</dbReference>
<dbReference type="STRING" id="237561.Q59ZH9"/>
<dbReference type="EnsemblFungi" id="C2_05090W_A-T">
    <property type="protein sequence ID" value="C2_05090W_A-T-p1"/>
    <property type="gene ID" value="C2_05090W_A"/>
</dbReference>
<dbReference type="GeneID" id="3643454"/>
<dbReference type="KEGG" id="cal:CAALFM_C205090WA"/>
<dbReference type="CGD" id="CAL0000200900">
    <property type="gene designation" value="MAK5"/>
</dbReference>
<dbReference type="VEuPathDB" id="FungiDB:C2_05090W_A"/>
<dbReference type="eggNOG" id="KOG0347">
    <property type="taxonomic scope" value="Eukaryota"/>
</dbReference>
<dbReference type="HOGENOM" id="CLU_003041_13_0_1"/>
<dbReference type="InParanoid" id="Q59ZH9"/>
<dbReference type="OrthoDB" id="4310724at2759"/>
<dbReference type="PRO" id="PR:Q59ZH9"/>
<dbReference type="Proteomes" id="UP000000559">
    <property type="component" value="Chromosome 2"/>
</dbReference>
<dbReference type="GO" id="GO:0005730">
    <property type="term" value="C:nucleolus"/>
    <property type="evidence" value="ECO:0000318"/>
    <property type="project" value="GO_Central"/>
</dbReference>
<dbReference type="GO" id="GO:0005524">
    <property type="term" value="F:ATP binding"/>
    <property type="evidence" value="ECO:0007669"/>
    <property type="project" value="UniProtKB-KW"/>
</dbReference>
<dbReference type="GO" id="GO:0016887">
    <property type="term" value="F:ATP hydrolysis activity"/>
    <property type="evidence" value="ECO:0007669"/>
    <property type="project" value="RHEA"/>
</dbReference>
<dbReference type="GO" id="GO:0003723">
    <property type="term" value="F:RNA binding"/>
    <property type="evidence" value="ECO:0007669"/>
    <property type="project" value="UniProtKB-KW"/>
</dbReference>
<dbReference type="GO" id="GO:0003724">
    <property type="term" value="F:RNA helicase activity"/>
    <property type="evidence" value="ECO:0007669"/>
    <property type="project" value="UniProtKB-EC"/>
</dbReference>
<dbReference type="GO" id="GO:0006364">
    <property type="term" value="P:rRNA processing"/>
    <property type="evidence" value="ECO:0007669"/>
    <property type="project" value="UniProtKB-KW"/>
</dbReference>
<dbReference type="CDD" id="cd17946">
    <property type="entry name" value="DEADc_DDX24"/>
    <property type="match status" value="1"/>
</dbReference>
<dbReference type="CDD" id="cd18787">
    <property type="entry name" value="SF2_C_DEAD"/>
    <property type="match status" value="1"/>
</dbReference>
<dbReference type="Gene3D" id="3.40.50.300">
    <property type="entry name" value="P-loop containing nucleotide triphosphate hydrolases"/>
    <property type="match status" value="2"/>
</dbReference>
<dbReference type="InterPro" id="IPR011545">
    <property type="entry name" value="DEAD/DEAH_box_helicase_dom"/>
</dbReference>
<dbReference type="InterPro" id="IPR014001">
    <property type="entry name" value="Helicase_ATP-bd"/>
</dbReference>
<dbReference type="InterPro" id="IPR001650">
    <property type="entry name" value="Helicase_C-like"/>
</dbReference>
<dbReference type="InterPro" id="IPR027417">
    <property type="entry name" value="P-loop_NTPase"/>
</dbReference>
<dbReference type="InterPro" id="IPR000629">
    <property type="entry name" value="RNA-helicase_DEAD-box_CS"/>
</dbReference>
<dbReference type="PANTHER" id="PTHR24031">
    <property type="entry name" value="RNA HELICASE"/>
    <property type="match status" value="1"/>
</dbReference>
<dbReference type="Pfam" id="PF00270">
    <property type="entry name" value="DEAD"/>
    <property type="match status" value="1"/>
</dbReference>
<dbReference type="Pfam" id="PF00271">
    <property type="entry name" value="Helicase_C"/>
    <property type="match status" value="1"/>
</dbReference>
<dbReference type="SMART" id="SM00487">
    <property type="entry name" value="DEXDc"/>
    <property type="match status" value="1"/>
</dbReference>
<dbReference type="SMART" id="SM00490">
    <property type="entry name" value="HELICc"/>
    <property type="match status" value="1"/>
</dbReference>
<dbReference type="SUPFAM" id="SSF52540">
    <property type="entry name" value="P-loop containing nucleoside triphosphate hydrolases"/>
    <property type="match status" value="2"/>
</dbReference>
<dbReference type="PROSITE" id="PS00039">
    <property type="entry name" value="DEAD_ATP_HELICASE"/>
    <property type="match status" value="1"/>
</dbReference>
<dbReference type="PROSITE" id="PS51192">
    <property type="entry name" value="HELICASE_ATP_BIND_1"/>
    <property type="match status" value="1"/>
</dbReference>
<dbReference type="PROSITE" id="PS51194">
    <property type="entry name" value="HELICASE_CTER"/>
    <property type="match status" value="1"/>
</dbReference>
<dbReference type="PROSITE" id="PS51195">
    <property type="entry name" value="Q_MOTIF"/>
    <property type="match status" value="1"/>
</dbReference>
<proteinExistence type="inferred from homology"/>
<feature type="chain" id="PRO_0000232231" description="ATP-dependent RNA helicase MAK5">
    <location>
        <begin position="1"/>
        <end position="782"/>
    </location>
</feature>
<feature type="domain" description="Helicase ATP-binding" evidence="2">
    <location>
        <begin position="228"/>
        <end position="426"/>
    </location>
</feature>
<feature type="domain" description="Helicase C-terminal" evidence="3">
    <location>
        <begin position="478"/>
        <end position="635"/>
    </location>
</feature>
<feature type="region of interest" description="Disordered" evidence="4">
    <location>
        <begin position="1"/>
        <end position="24"/>
    </location>
</feature>
<feature type="region of interest" description="Disordered" evidence="4">
    <location>
        <begin position="71"/>
        <end position="164"/>
    </location>
</feature>
<feature type="region of interest" description="Disordered" evidence="4">
    <location>
        <begin position="762"/>
        <end position="782"/>
    </location>
</feature>
<feature type="short sequence motif" description="Q motif">
    <location>
        <begin position="197"/>
        <end position="225"/>
    </location>
</feature>
<feature type="short sequence motif" description="DEAD box">
    <location>
        <begin position="364"/>
        <end position="367"/>
    </location>
</feature>
<feature type="compositionally biased region" description="Basic residues" evidence="4">
    <location>
        <begin position="1"/>
        <end position="22"/>
    </location>
</feature>
<feature type="compositionally biased region" description="Basic and acidic residues" evidence="4">
    <location>
        <begin position="71"/>
        <end position="88"/>
    </location>
</feature>
<feature type="compositionally biased region" description="Acidic residues" evidence="4">
    <location>
        <begin position="96"/>
        <end position="147"/>
    </location>
</feature>
<feature type="compositionally biased region" description="Basic residues" evidence="4">
    <location>
        <begin position="766"/>
        <end position="782"/>
    </location>
</feature>
<feature type="binding site" evidence="2">
    <location>
        <begin position="241"/>
        <end position="248"/>
    </location>
    <ligand>
        <name>ATP</name>
        <dbReference type="ChEBI" id="CHEBI:30616"/>
    </ligand>
</feature>
<comment type="function">
    <text evidence="1">ATP-binding RNA helicase involved in the biogenesis of 60S ribosomal subunits and is required for the normal formation of 25S and 5.8S rRNAs.</text>
</comment>
<comment type="catalytic activity">
    <reaction>
        <text>ATP + H2O = ADP + phosphate + H(+)</text>
        <dbReference type="Rhea" id="RHEA:13065"/>
        <dbReference type="ChEBI" id="CHEBI:15377"/>
        <dbReference type="ChEBI" id="CHEBI:15378"/>
        <dbReference type="ChEBI" id="CHEBI:30616"/>
        <dbReference type="ChEBI" id="CHEBI:43474"/>
        <dbReference type="ChEBI" id="CHEBI:456216"/>
        <dbReference type="EC" id="3.6.4.13"/>
    </reaction>
</comment>
<comment type="subcellular location">
    <subcellularLocation>
        <location evidence="1">Nucleus</location>
        <location evidence="1">Nucleolus</location>
    </subcellularLocation>
</comment>
<comment type="domain">
    <text>The Q motif is unique to and characteristic of the DEAD box family of RNA helicases and controls ATP binding and hydrolysis.</text>
</comment>
<comment type="similarity">
    <text evidence="5">Belongs to the DEAD box helicase family. DDX24/MAK5 subfamily.</text>
</comment>
<gene>
    <name type="primary">MAK5</name>
    <name type="ordered locus">CAALFM_C205090WA</name>
    <name type="ORF">CaO19.11024</name>
    <name type="ORF">CaO19.3540</name>
</gene>
<sequence length="782" mass="88059">MAKQGKNKVSKPRKPPTLKQKLKKESKVVKAKDLQWKLVDIPDNLGDYEGFYGLEEIDGVDVQIVNGKAEFIVRDNGKVENKSKKEETNENGENNMDVEDNETPEVEDEKPTEQEEEEEEEEEEEEEEEEEEEEEEFAGFEDDENNQEDANTSERVSNNDKDDKLAESNDELNAVSFANLDLPLPDDNEINLPNWQEGDLGSSISAYTLYGLSQLDFKKPTPIQKETIPIALSGKDVIGKATTGSGKTLAYGIPILEKYIQSLNLIKQNNKDKKINHPTGIIFAPTRELAHQVVDHLNKLAKYSPLSTRGIVSITGGLSIQKQQRLLRHGPGIIVATPGRMLELVQGDSELAKRLASIDIIVLDEADRLLQDGHFDEFEKILELFGKNRPKSKSIEWKWQTLVFSATFSRDLFRKLDRHQKGKSSSLMGNDEIVQLLNEKLKFKDKKPTLVDANPKEIVSGQITEALVECGPTERDLYLYYFLLMYKGSTLVFANSIDSVKRLVPLLNNLNIPAFSIHSSMIQKQRLRALEKFKEASQKNEVAVLVASDVAARGLDIPNIDHVVHYHLPRSADVYIHRSGRTARAGKEGVSVMFCSPQEASGPLRKLRRLVAGNSNKESRLNMHNDVKLLPIEMDLVSQIKPRVEISSKLADASISSTATRKEDSWVKQAAEDLGLDDLSGLEDFEDDIIKKQRKRKEGKMLSKDETKALKYELKTLLANPIKKNTRKSYITSGLQNLAHQMVTGAHHDDVLGHEKVNALSDLKGSKNKNKKIEKKRISKKK</sequence>
<organism>
    <name type="scientific">Candida albicans (strain SC5314 / ATCC MYA-2876)</name>
    <name type="common">Yeast</name>
    <dbReference type="NCBI Taxonomy" id="237561"/>
    <lineage>
        <taxon>Eukaryota</taxon>
        <taxon>Fungi</taxon>
        <taxon>Dikarya</taxon>
        <taxon>Ascomycota</taxon>
        <taxon>Saccharomycotina</taxon>
        <taxon>Pichiomycetes</taxon>
        <taxon>Debaryomycetaceae</taxon>
        <taxon>Candida/Lodderomyces clade</taxon>
        <taxon>Candida</taxon>
    </lineage>
</organism>
<name>MAK5_CANAL</name>